<reference key="1">
    <citation type="journal article" date="2007" name="Genome Res.">
        <title>Genome characteristics of facultatively symbiotic Frankia sp. strains reflect host range and host plant biogeography.</title>
        <authorList>
            <person name="Normand P."/>
            <person name="Lapierre P."/>
            <person name="Tisa L.S."/>
            <person name="Gogarten J.P."/>
            <person name="Alloisio N."/>
            <person name="Bagnarol E."/>
            <person name="Bassi C.A."/>
            <person name="Berry A.M."/>
            <person name="Bickhart D.M."/>
            <person name="Choisne N."/>
            <person name="Couloux A."/>
            <person name="Cournoyer B."/>
            <person name="Cruveiller S."/>
            <person name="Daubin V."/>
            <person name="Demange N."/>
            <person name="Francino M.P."/>
            <person name="Goltsman E."/>
            <person name="Huang Y."/>
            <person name="Kopp O.R."/>
            <person name="Labarre L."/>
            <person name="Lapidus A."/>
            <person name="Lavire C."/>
            <person name="Marechal J."/>
            <person name="Martinez M."/>
            <person name="Mastronunzio J.E."/>
            <person name="Mullin B.C."/>
            <person name="Niemann J."/>
            <person name="Pujic P."/>
            <person name="Rawnsley T."/>
            <person name="Rouy Z."/>
            <person name="Schenowitz C."/>
            <person name="Sellstedt A."/>
            <person name="Tavares F."/>
            <person name="Tomkins J.P."/>
            <person name="Vallenet D."/>
            <person name="Valverde C."/>
            <person name="Wall L.G."/>
            <person name="Wang Y."/>
            <person name="Medigue C."/>
            <person name="Benson D.R."/>
        </authorList>
    </citation>
    <scope>NUCLEOTIDE SEQUENCE [LARGE SCALE GENOMIC DNA]</scope>
    <source>
        <strain>EAN1pec</strain>
    </source>
</reference>
<organism>
    <name type="scientific">Parafrankia sp. (strain EAN1pec)</name>
    <dbReference type="NCBI Taxonomy" id="298653"/>
    <lineage>
        <taxon>Bacteria</taxon>
        <taxon>Bacillati</taxon>
        <taxon>Actinomycetota</taxon>
        <taxon>Actinomycetes</taxon>
        <taxon>Frankiales</taxon>
        <taxon>Frankiaceae</taxon>
        <taxon>Parafrankia</taxon>
    </lineage>
</organism>
<dbReference type="EC" id="1.2.1.10" evidence="1"/>
<dbReference type="EMBL" id="CP000820">
    <property type="protein sequence ID" value="ABW12304.1"/>
    <property type="molecule type" value="Genomic_DNA"/>
</dbReference>
<dbReference type="RefSeq" id="WP_020460456.1">
    <property type="nucleotide sequence ID" value="NC_009921.1"/>
</dbReference>
<dbReference type="SMR" id="A8LAA2"/>
<dbReference type="STRING" id="298653.Franean1_2883"/>
<dbReference type="KEGG" id="fre:Franean1_2883"/>
<dbReference type="eggNOG" id="COG4569">
    <property type="taxonomic scope" value="Bacteria"/>
</dbReference>
<dbReference type="HOGENOM" id="CLU_062208_0_0_11"/>
<dbReference type="GO" id="GO:0008774">
    <property type="term" value="F:acetaldehyde dehydrogenase (acetylating) activity"/>
    <property type="evidence" value="ECO:0007669"/>
    <property type="project" value="UniProtKB-UniRule"/>
</dbReference>
<dbReference type="GO" id="GO:0051287">
    <property type="term" value="F:NAD binding"/>
    <property type="evidence" value="ECO:0007669"/>
    <property type="project" value="UniProtKB-UniRule"/>
</dbReference>
<dbReference type="GO" id="GO:0009056">
    <property type="term" value="P:catabolic process"/>
    <property type="evidence" value="ECO:0007669"/>
    <property type="project" value="UniProtKB-KW"/>
</dbReference>
<dbReference type="CDD" id="cd23933">
    <property type="entry name" value="ALDH_C"/>
    <property type="match status" value="1"/>
</dbReference>
<dbReference type="Gene3D" id="3.30.360.10">
    <property type="entry name" value="Dihydrodipicolinate Reductase, domain 2"/>
    <property type="match status" value="1"/>
</dbReference>
<dbReference type="Gene3D" id="3.40.50.720">
    <property type="entry name" value="NAD(P)-binding Rossmann-like Domain"/>
    <property type="match status" value="1"/>
</dbReference>
<dbReference type="HAMAP" id="MF_01657">
    <property type="entry name" value="Ac_ald_DH_ac"/>
    <property type="match status" value="1"/>
</dbReference>
<dbReference type="InterPro" id="IPR003361">
    <property type="entry name" value="Acetaldehyde_dehydrogenase"/>
</dbReference>
<dbReference type="InterPro" id="IPR015426">
    <property type="entry name" value="Acetylaldehyde_DH_C"/>
</dbReference>
<dbReference type="InterPro" id="IPR036291">
    <property type="entry name" value="NAD(P)-bd_dom_sf"/>
</dbReference>
<dbReference type="InterPro" id="IPR000534">
    <property type="entry name" value="Semialdehyde_DH_NAD-bd"/>
</dbReference>
<dbReference type="NCBIfam" id="TIGR03215">
    <property type="entry name" value="ac_ald_DH_ac"/>
    <property type="match status" value="1"/>
</dbReference>
<dbReference type="NCBIfam" id="NF006157">
    <property type="entry name" value="PRK08300.1"/>
    <property type="match status" value="1"/>
</dbReference>
<dbReference type="Pfam" id="PF09290">
    <property type="entry name" value="AcetDehyd-dimer"/>
    <property type="match status" value="1"/>
</dbReference>
<dbReference type="Pfam" id="PF01118">
    <property type="entry name" value="Semialdhyde_dh"/>
    <property type="match status" value="1"/>
</dbReference>
<dbReference type="PIRSF" id="PIRSF015689">
    <property type="entry name" value="Actaldh_dh_actl"/>
    <property type="match status" value="1"/>
</dbReference>
<dbReference type="SMART" id="SM00859">
    <property type="entry name" value="Semialdhyde_dh"/>
    <property type="match status" value="1"/>
</dbReference>
<dbReference type="SUPFAM" id="SSF55347">
    <property type="entry name" value="Glyceraldehyde-3-phosphate dehydrogenase-like, C-terminal domain"/>
    <property type="match status" value="1"/>
</dbReference>
<dbReference type="SUPFAM" id="SSF51735">
    <property type="entry name" value="NAD(P)-binding Rossmann-fold domains"/>
    <property type="match status" value="1"/>
</dbReference>
<protein>
    <recommendedName>
        <fullName evidence="1">Acetaldehyde dehydrogenase 1</fullName>
        <ecNumber evidence="1">1.2.1.10</ecNumber>
    </recommendedName>
    <alternativeName>
        <fullName evidence="1">Acetaldehyde dehydrogenase [acetylating] 1</fullName>
    </alternativeName>
</protein>
<evidence type="ECO:0000255" key="1">
    <source>
        <dbReference type="HAMAP-Rule" id="MF_01657"/>
    </source>
</evidence>
<gene>
    <name type="ordered locus">Franean1_2883</name>
</gene>
<accession>A8LAA2</accession>
<feature type="chain" id="PRO_0000387661" description="Acetaldehyde dehydrogenase 1">
    <location>
        <begin position="1"/>
        <end position="324"/>
    </location>
</feature>
<feature type="active site" description="Acyl-thioester intermediate" evidence="1">
    <location>
        <position position="136"/>
    </location>
</feature>
<feature type="binding site" evidence="1">
    <location>
        <begin position="18"/>
        <end position="21"/>
    </location>
    <ligand>
        <name>NAD(+)</name>
        <dbReference type="ChEBI" id="CHEBI:57540"/>
    </ligand>
</feature>
<feature type="binding site" evidence="1">
    <location>
        <begin position="167"/>
        <end position="175"/>
    </location>
    <ligand>
        <name>NAD(+)</name>
        <dbReference type="ChEBI" id="CHEBI:57540"/>
    </ligand>
</feature>
<feature type="binding site" evidence="1">
    <location>
        <position position="297"/>
    </location>
    <ligand>
        <name>NAD(+)</name>
        <dbReference type="ChEBI" id="CHEBI:57540"/>
    </ligand>
</feature>
<sequence>MATATSGTGKTKVAVIGSGNIGTDLMIKILRTSEVLEIAAMVGIDAESDGLARARRLKVATTHEGIDGLLRMPEFDDIEIVFDATSAGAHARNDELLRARGRRVIDLTPAAIGPYVVPPVNLDAHLDAPNINMVTCGGQATIPIVAAVNAVTPVAYAEIVASIASKSAGPGTRANIDEFTETTASAIEKVGGAARGKAIIVLNPAEPPLVMRDTVYCLIGASDQATQDAVVASVTRMVDRVREYVPGYRLKQQVQIEEASADDPLRQLAPDGSEPAKVTVFLEVTGAAHYLPAYAGNLDIMTSAALRAGERLAQTLTQREGATA</sequence>
<keyword id="KW-0058">Aromatic hydrocarbons catabolism</keyword>
<keyword id="KW-0520">NAD</keyword>
<keyword id="KW-0560">Oxidoreductase</keyword>
<comment type="catalytic activity">
    <reaction evidence="1">
        <text>acetaldehyde + NAD(+) + CoA = acetyl-CoA + NADH + H(+)</text>
        <dbReference type="Rhea" id="RHEA:23288"/>
        <dbReference type="ChEBI" id="CHEBI:15343"/>
        <dbReference type="ChEBI" id="CHEBI:15378"/>
        <dbReference type="ChEBI" id="CHEBI:57287"/>
        <dbReference type="ChEBI" id="CHEBI:57288"/>
        <dbReference type="ChEBI" id="CHEBI:57540"/>
        <dbReference type="ChEBI" id="CHEBI:57945"/>
        <dbReference type="EC" id="1.2.1.10"/>
    </reaction>
</comment>
<comment type="similarity">
    <text evidence="1">Belongs to the acetaldehyde dehydrogenase family.</text>
</comment>
<name>ACDH1_PARS2</name>
<proteinExistence type="inferred from homology"/>